<protein>
    <recommendedName>
        <fullName>Profilin</fullName>
    </recommendedName>
</protein>
<comment type="function">
    <text evidence="1">More likely to influence phosphoinositide metabolism than actin assembly.</text>
</comment>
<comment type="similarity">
    <text evidence="2">Belongs to the profilin family.</text>
</comment>
<dbReference type="EMBL" id="U94848">
    <property type="protein sequence ID" value="AAB96534.1"/>
    <property type="molecule type" value="Genomic_DNA"/>
</dbReference>
<dbReference type="EMBL" id="AY603355">
    <property type="protein sequence ID" value="AAT10552.1"/>
    <property type="molecule type" value="Genomic_DNA"/>
</dbReference>
<dbReference type="PIR" id="T37427">
    <property type="entry name" value="T37427"/>
</dbReference>
<dbReference type="SMR" id="O57243"/>
<dbReference type="Proteomes" id="UP000159908">
    <property type="component" value="Segment"/>
</dbReference>
<dbReference type="Proteomes" id="UP000172909">
    <property type="component" value="Segment"/>
</dbReference>
<dbReference type="GO" id="GO:0003779">
    <property type="term" value="F:actin binding"/>
    <property type="evidence" value="ECO:0007669"/>
    <property type="project" value="UniProtKB-KW"/>
</dbReference>
<dbReference type="Gene3D" id="3.30.450.30">
    <property type="entry name" value="Dynein light chain 2a, cytoplasmic"/>
    <property type="match status" value="1"/>
</dbReference>
<dbReference type="InterPro" id="IPR048278">
    <property type="entry name" value="PFN"/>
</dbReference>
<dbReference type="InterPro" id="IPR005455">
    <property type="entry name" value="PFN_euk"/>
</dbReference>
<dbReference type="InterPro" id="IPR036140">
    <property type="entry name" value="PFN_sf"/>
</dbReference>
<dbReference type="InterPro" id="IPR027310">
    <property type="entry name" value="Profilin_CS"/>
</dbReference>
<dbReference type="Pfam" id="PF00235">
    <property type="entry name" value="Profilin"/>
    <property type="match status" value="1"/>
</dbReference>
<dbReference type="SMART" id="SM00392">
    <property type="entry name" value="PROF"/>
    <property type="match status" value="1"/>
</dbReference>
<dbReference type="SUPFAM" id="SSF55770">
    <property type="entry name" value="Profilin (actin-binding protein)"/>
    <property type="match status" value="1"/>
</dbReference>
<dbReference type="PROSITE" id="PS00414">
    <property type="entry name" value="PROFILIN"/>
    <property type="match status" value="1"/>
</dbReference>
<reference key="1">
    <citation type="journal article" date="1998" name="Virology">
        <title>The complete genomic sequence of the modified vaccinia Ankara strain: comparison with other orthopoxviruses.</title>
        <authorList>
            <person name="Antoine G."/>
            <person name="Scheiflinger F."/>
            <person name="Dorner F."/>
            <person name="Falkner F.G."/>
        </authorList>
    </citation>
    <scope>NUCLEOTIDE SEQUENCE [LARGE SCALE GENOMIC DNA]</scope>
</reference>
<reference key="2">
    <citation type="submission" date="2004-04" db="EMBL/GenBank/DDBJ databases">
        <authorList>
            <person name="Esposito J.J."/>
            <person name="Frace M."/>
            <person name="Sammons S.A."/>
            <person name="Olsen-Rasmussen M.S."/>
            <person name="Osborne J."/>
            <person name="Khristova M."/>
            <person name="Wohlhueter R.M."/>
        </authorList>
    </citation>
    <scope>NUCLEOTIDE SEQUENCE [LARGE SCALE GENOMIC DNA]</scope>
    <source>
        <strain>Isolate Acambis 3000</strain>
    </source>
</reference>
<organismHost>
    <name type="scientific">Homo sapiens</name>
    <name type="common">Human</name>
    <dbReference type="NCBI Taxonomy" id="9606"/>
</organismHost>
<organism>
    <name type="scientific">Vaccinia virus (strain Ankara)</name>
    <name type="common">VACV</name>
    <dbReference type="NCBI Taxonomy" id="126794"/>
    <lineage>
        <taxon>Viruses</taxon>
        <taxon>Varidnaviria</taxon>
        <taxon>Bamfordvirae</taxon>
        <taxon>Nucleocytoviricota</taxon>
        <taxon>Pokkesviricetes</taxon>
        <taxon>Chitovirales</taxon>
        <taxon>Poxviridae</taxon>
        <taxon>Chordopoxvirinae</taxon>
        <taxon>Orthopoxvirus</taxon>
        <taxon>Vaccinia virus</taxon>
    </lineage>
</organism>
<keyword id="KW-0009">Actin-binding</keyword>
<sequence length="128" mass="14543">MAEWHKIIEDISKNNKFEDAAIVDYKTTKNVLAAIPNRTFAKINPLITNRNILKPLIGQKYCIVYTNSLMDENTYAMELLTGYAPVSPIVIARTHTALIFLMGKPTTSRRDVYRTCRDHATRVRATGN</sequence>
<gene>
    <name type="ordered locus">MVA154R</name>
    <name type="ordered locus">ACAM3000_MVA_154</name>
</gene>
<feature type="chain" id="PRO_0000199680" description="Profilin">
    <location>
        <begin position="1"/>
        <end position="128"/>
    </location>
</feature>
<accession>O57243</accession>
<proteinExistence type="inferred from homology"/>
<name>PROF_VACCA</name>
<evidence type="ECO:0000250" key="1"/>
<evidence type="ECO:0000305" key="2"/>